<evidence type="ECO:0000255" key="1">
    <source>
        <dbReference type="HAMAP-Rule" id="MF_00251"/>
    </source>
</evidence>
<evidence type="ECO:0000305" key="2"/>
<dbReference type="EMBL" id="CR543861">
    <property type="protein sequence ID" value="CAG69882.1"/>
    <property type="molecule type" value="Genomic_DNA"/>
</dbReference>
<dbReference type="RefSeq" id="WP_000867907.1">
    <property type="nucleotide sequence ID" value="NC_005966.1"/>
</dbReference>
<dbReference type="SMR" id="Q6F7T3"/>
<dbReference type="STRING" id="202950.GCA_001485005_02957"/>
<dbReference type="GeneID" id="97425220"/>
<dbReference type="KEGG" id="aci:ACIAD3198"/>
<dbReference type="eggNOG" id="COG0257">
    <property type="taxonomic scope" value="Bacteria"/>
</dbReference>
<dbReference type="HOGENOM" id="CLU_135723_6_2_6"/>
<dbReference type="OrthoDB" id="9802520at2"/>
<dbReference type="BioCyc" id="ASP62977:ACIAD_RS14490-MONOMER"/>
<dbReference type="Proteomes" id="UP000000430">
    <property type="component" value="Chromosome"/>
</dbReference>
<dbReference type="GO" id="GO:0005737">
    <property type="term" value="C:cytoplasm"/>
    <property type="evidence" value="ECO:0007669"/>
    <property type="project" value="UniProtKB-ARBA"/>
</dbReference>
<dbReference type="GO" id="GO:1990904">
    <property type="term" value="C:ribonucleoprotein complex"/>
    <property type="evidence" value="ECO:0007669"/>
    <property type="project" value="UniProtKB-KW"/>
</dbReference>
<dbReference type="GO" id="GO:0005840">
    <property type="term" value="C:ribosome"/>
    <property type="evidence" value="ECO:0007669"/>
    <property type="project" value="UniProtKB-KW"/>
</dbReference>
<dbReference type="GO" id="GO:0003735">
    <property type="term" value="F:structural constituent of ribosome"/>
    <property type="evidence" value="ECO:0007669"/>
    <property type="project" value="InterPro"/>
</dbReference>
<dbReference type="GO" id="GO:0006412">
    <property type="term" value="P:translation"/>
    <property type="evidence" value="ECO:0007669"/>
    <property type="project" value="UniProtKB-UniRule"/>
</dbReference>
<dbReference type="HAMAP" id="MF_00251">
    <property type="entry name" value="Ribosomal_bL36"/>
    <property type="match status" value="1"/>
</dbReference>
<dbReference type="InterPro" id="IPR000473">
    <property type="entry name" value="Ribosomal_bL36"/>
</dbReference>
<dbReference type="InterPro" id="IPR035977">
    <property type="entry name" value="Ribosomal_bL36_sp"/>
</dbReference>
<dbReference type="NCBIfam" id="TIGR01022">
    <property type="entry name" value="rpmJ_bact"/>
    <property type="match status" value="1"/>
</dbReference>
<dbReference type="PANTHER" id="PTHR42888">
    <property type="entry name" value="50S RIBOSOMAL PROTEIN L36, CHLOROPLASTIC"/>
    <property type="match status" value="1"/>
</dbReference>
<dbReference type="PANTHER" id="PTHR42888:SF1">
    <property type="entry name" value="LARGE RIBOSOMAL SUBUNIT PROTEIN BL36C"/>
    <property type="match status" value="1"/>
</dbReference>
<dbReference type="Pfam" id="PF00444">
    <property type="entry name" value="Ribosomal_L36"/>
    <property type="match status" value="1"/>
</dbReference>
<dbReference type="SUPFAM" id="SSF57840">
    <property type="entry name" value="Ribosomal protein L36"/>
    <property type="match status" value="1"/>
</dbReference>
<dbReference type="PROSITE" id="PS00828">
    <property type="entry name" value="RIBOSOMAL_L36"/>
    <property type="match status" value="1"/>
</dbReference>
<organism>
    <name type="scientific">Acinetobacter baylyi (strain ATCC 33305 / BD413 / ADP1)</name>
    <dbReference type="NCBI Taxonomy" id="62977"/>
    <lineage>
        <taxon>Bacteria</taxon>
        <taxon>Pseudomonadati</taxon>
        <taxon>Pseudomonadota</taxon>
        <taxon>Gammaproteobacteria</taxon>
        <taxon>Moraxellales</taxon>
        <taxon>Moraxellaceae</taxon>
        <taxon>Acinetobacter</taxon>
    </lineage>
</organism>
<comment type="similarity">
    <text evidence="1">Belongs to the bacterial ribosomal protein bL36 family.</text>
</comment>
<proteinExistence type="inferred from homology"/>
<feature type="chain" id="PRO_0000126138" description="Large ribosomal subunit protein bL36">
    <location>
        <begin position="1"/>
        <end position="38"/>
    </location>
</feature>
<sequence>MKVQASVKKICGSCKVIRRNGVIRVICSAEPRHKQRQG</sequence>
<keyword id="KW-0687">Ribonucleoprotein</keyword>
<keyword id="KW-0689">Ribosomal protein</keyword>
<protein>
    <recommendedName>
        <fullName evidence="1">Large ribosomal subunit protein bL36</fullName>
    </recommendedName>
    <alternativeName>
        <fullName evidence="2">50S ribosomal protein L36</fullName>
    </alternativeName>
</protein>
<accession>Q6F7T3</accession>
<gene>
    <name evidence="1" type="primary">rpmJ</name>
    <name type="ordered locus">ACIAD3198</name>
</gene>
<reference key="1">
    <citation type="journal article" date="2004" name="Nucleic Acids Res.">
        <title>Unique features revealed by the genome sequence of Acinetobacter sp. ADP1, a versatile and naturally transformation competent bacterium.</title>
        <authorList>
            <person name="Barbe V."/>
            <person name="Vallenet D."/>
            <person name="Fonknechten N."/>
            <person name="Kreimeyer A."/>
            <person name="Oztas S."/>
            <person name="Labarre L."/>
            <person name="Cruveiller S."/>
            <person name="Robert C."/>
            <person name="Duprat S."/>
            <person name="Wincker P."/>
            <person name="Ornston L.N."/>
            <person name="Weissenbach J."/>
            <person name="Marliere P."/>
            <person name="Cohen G.N."/>
            <person name="Medigue C."/>
        </authorList>
    </citation>
    <scope>NUCLEOTIDE SEQUENCE [LARGE SCALE GENOMIC DNA]</scope>
    <source>
        <strain>ATCC 33305 / BD413 / ADP1</strain>
    </source>
</reference>
<name>RL36_ACIAD</name>